<keyword id="KW-0021">Allosteric enzyme</keyword>
<keyword id="KW-0963">Cytoplasm</keyword>
<keyword id="KW-0378">Hydrolase</keyword>
<keyword id="KW-0479">Metal-binding</keyword>
<keyword id="KW-0645">Protease</keyword>
<keyword id="KW-0915">Sodium</keyword>
<keyword id="KW-0888">Threonine protease</keyword>
<comment type="function">
    <text evidence="1">Protease subunit of a proteasome-like degradation complex believed to be a general protein degrading machinery.</text>
</comment>
<comment type="catalytic activity">
    <reaction evidence="1">
        <text>ATP-dependent cleavage of peptide bonds with broad specificity.</text>
        <dbReference type="EC" id="3.4.25.2"/>
    </reaction>
</comment>
<comment type="activity regulation">
    <text evidence="1">Allosterically activated by HslU binding.</text>
</comment>
<comment type="subunit">
    <text evidence="1">A double ring-shaped homohexamer of HslV is capped on each side by a ring-shaped HslU homohexamer. The assembly of the HslU/HslV complex is dependent on binding of ATP.</text>
</comment>
<comment type="subcellular location">
    <subcellularLocation>
        <location evidence="1">Cytoplasm</location>
    </subcellularLocation>
</comment>
<comment type="similarity">
    <text evidence="1">Belongs to the peptidase T1B family. HslV subfamily.</text>
</comment>
<sequence length="180" mass="19471">MGNFHATTIFAIHHNGKCAMAGDGQVTFGNAVVMKHTARKVRKLFQGKVLAGFAGSVADAFTLFEMFEGKLEEYNGNLQRAAVEMAKQWRGDKMLRQLEAMLIVMDETTLLLVSGTGEVIEPDDGILAIGSGGHYALAAGRALKRHASEHLTAKEIAKASLEIAGDICVYTNHNIIVEEL</sequence>
<feature type="chain" id="PRO_1000078415" description="ATP-dependent protease subunit HslV">
    <location>
        <begin position="1"/>
        <end position="180"/>
    </location>
</feature>
<feature type="active site" evidence="1">
    <location>
        <position position="7"/>
    </location>
</feature>
<feature type="binding site" evidence="1">
    <location>
        <position position="165"/>
    </location>
    <ligand>
        <name>Na(+)</name>
        <dbReference type="ChEBI" id="CHEBI:29101"/>
    </ligand>
</feature>
<feature type="binding site" evidence="1">
    <location>
        <position position="168"/>
    </location>
    <ligand>
        <name>Na(+)</name>
        <dbReference type="ChEBI" id="CHEBI:29101"/>
    </ligand>
</feature>
<feature type="binding site" evidence="1">
    <location>
        <position position="171"/>
    </location>
    <ligand>
        <name>Na(+)</name>
        <dbReference type="ChEBI" id="CHEBI:29101"/>
    </ligand>
</feature>
<gene>
    <name evidence="1" type="primary">hslV</name>
    <name type="ordered locus">Bcer98_2482</name>
</gene>
<protein>
    <recommendedName>
        <fullName evidence="1">ATP-dependent protease subunit HslV</fullName>
        <ecNumber evidence="1">3.4.25.2</ecNumber>
    </recommendedName>
</protein>
<reference key="1">
    <citation type="journal article" date="2008" name="Chem. Biol. Interact.">
        <title>Extending the Bacillus cereus group genomics to putative food-borne pathogens of different toxicity.</title>
        <authorList>
            <person name="Lapidus A."/>
            <person name="Goltsman E."/>
            <person name="Auger S."/>
            <person name="Galleron N."/>
            <person name="Segurens B."/>
            <person name="Dossat C."/>
            <person name="Land M.L."/>
            <person name="Broussolle V."/>
            <person name="Brillard J."/>
            <person name="Guinebretiere M.-H."/>
            <person name="Sanchis V."/>
            <person name="Nguen-the C."/>
            <person name="Lereclus D."/>
            <person name="Richardson P."/>
            <person name="Wincker P."/>
            <person name="Weissenbach J."/>
            <person name="Ehrlich S.D."/>
            <person name="Sorokin A."/>
        </authorList>
    </citation>
    <scope>NUCLEOTIDE SEQUENCE [LARGE SCALE GENOMIC DNA]</scope>
    <source>
        <strain>DSM 22905 / CIP 110041 / 391-98 / NVH 391-98</strain>
    </source>
</reference>
<accession>A7GRG0</accession>
<organism>
    <name type="scientific">Bacillus cytotoxicus (strain DSM 22905 / CIP 110041 / 391-98 / NVH 391-98)</name>
    <dbReference type="NCBI Taxonomy" id="315749"/>
    <lineage>
        <taxon>Bacteria</taxon>
        <taxon>Bacillati</taxon>
        <taxon>Bacillota</taxon>
        <taxon>Bacilli</taxon>
        <taxon>Bacillales</taxon>
        <taxon>Bacillaceae</taxon>
        <taxon>Bacillus</taxon>
        <taxon>Bacillus cereus group</taxon>
    </lineage>
</organism>
<proteinExistence type="inferred from homology"/>
<name>HSLV_BACCN</name>
<evidence type="ECO:0000255" key="1">
    <source>
        <dbReference type="HAMAP-Rule" id="MF_00248"/>
    </source>
</evidence>
<dbReference type="EC" id="3.4.25.2" evidence="1"/>
<dbReference type="EMBL" id="CP000764">
    <property type="protein sequence ID" value="ABS22718.1"/>
    <property type="molecule type" value="Genomic_DNA"/>
</dbReference>
<dbReference type="RefSeq" id="WP_012094922.1">
    <property type="nucleotide sequence ID" value="NC_009674.1"/>
</dbReference>
<dbReference type="SMR" id="A7GRG0"/>
<dbReference type="STRING" id="315749.Bcer98_2482"/>
<dbReference type="GeneID" id="33897737"/>
<dbReference type="KEGG" id="bcy:Bcer98_2482"/>
<dbReference type="eggNOG" id="COG5405">
    <property type="taxonomic scope" value="Bacteria"/>
</dbReference>
<dbReference type="HOGENOM" id="CLU_093872_1_1_9"/>
<dbReference type="OrthoDB" id="9804884at2"/>
<dbReference type="Proteomes" id="UP000002300">
    <property type="component" value="Chromosome"/>
</dbReference>
<dbReference type="GO" id="GO:0009376">
    <property type="term" value="C:HslUV protease complex"/>
    <property type="evidence" value="ECO:0007669"/>
    <property type="project" value="UniProtKB-UniRule"/>
</dbReference>
<dbReference type="GO" id="GO:0005839">
    <property type="term" value="C:proteasome core complex"/>
    <property type="evidence" value="ECO:0007669"/>
    <property type="project" value="InterPro"/>
</dbReference>
<dbReference type="GO" id="GO:0046872">
    <property type="term" value="F:metal ion binding"/>
    <property type="evidence" value="ECO:0007669"/>
    <property type="project" value="UniProtKB-KW"/>
</dbReference>
<dbReference type="GO" id="GO:0004298">
    <property type="term" value="F:threonine-type endopeptidase activity"/>
    <property type="evidence" value="ECO:0007669"/>
    <property type="project" value="UniProtKB-KW"/>
</dbReference>
<dbReference type="GO" id="GO:0051603">
    <property type="term" value="P:proteolysis involved in protein catabolic process"/>
    <property type="evidence" value="ECO:0007669"/>
    <property type="project" value="InterPro"/>
</dbReference>
<dbReference type="CDD" id="cd01913">
    <property type="entry name" value="protease_HslV"/>
    <property type="match status" value="1"/>
</dbReference>
<dbReference type="Gene3D" id="3.60.20.10">
    <property type="entry name" value="Glutamine Phosphoribosylpyrophosphate, subunit 1, domain 1"/>
    <property type="match status" value="1"/>
</dbReference>
<dbReference type="HAMAP" id="MF_00248">
    <property type="entry name" value="HslV"/>
    <property type="match status" value="1"/>
</dbReference>
<dbReference type="InterPro" id="IPR022281">
    <property type="entry name" value="ATP-dep_Prtase_HsIV_su"/>
</dbReference>
<dbReference type="InterPro" id="IPR029055">
    <property type="entry name" value="Ntn_hydrolases_N"/>
</dbReference>
<dbReference type="InterPro" id="IPR001353">
    <property type="entry name" value="Proteasome_sua/b"/>
</dbReference>
<dbReference type="InterPro" id="IPR023333">
    <property type="entry name" value="Proteasome_suB-type"/>
</dbReference>
<dbReference type="NCBIfam" id="TIGR03692">
    <property type="entry name" value="ATP_dep_HslV"/>
    <property type="match status" value="1"/>
</dbReference>
<dbReference type="NCBIfam" id="NF003964">
    <property type="entry name" value="PRK05456.1"/>
    <property type="match status" value="1"/>
</dbReference>
<dbReference type="PANTHER" id="PTHR32194:SF0">
    <property type="entry name" value="ATP-DEPENDENT PROTEASE SUBUNIT HSLV"/>
    <property type="match status" value="1"/>
</dbReference>
<dbReference type="PANTHER" id="PTHR32194">
    <property type="entry name" value="METALLOPROTEASE TLDD"/>
    <property type="match status" value="1"/>
</dbReference>
<dbReference type="Pfam" id="PF00227">
    <property type="entry name" value="Proteasome"/>
    <property type="match status" value="1"/>
</dbReference>
<dbReference type="PIRSF" id="PIRSF039093">
    <property type="entry name" value="HslV"/>
    <property type="match status" value="1"/>
</dbReference>
<dbReference type="SUPFAM" id="SSF56235">
    <property type="entry name" value="N-terminal nucleophile aminohydrolases (Ntn hydrolases)"/>
    <property type="match status" value="1"/>
</dbReference>
<dbReference type="PROSITE" id="PS51476">
    <property type="entry name" value="PROTEASOME_BETA_2"/>
    <property type="match status" value="1"/>
</dbReference>